<name>RPOD_BORBU</name>
<organism>
    <name type="scientific">Borreliella burgdorferi (strain ATCC 35210 / DSM 4680 / CIP 102532 / B31)</name>
    <name type="common">Borrelia burgdorferi</name>
    <dbReference type="NCBI Taxonomy" id="224326"/>
    <lineage>
        <taxon>Bacteria</taxon>
        <taxon>Pseudomonadati</taxon>
        <taxon>Spirochaetota</taxon>
        <taxon>Spirochaetia</taxon>
        <taxon>Spirochaetales</taxon>
        <taxon>Borreliaceae</taxon>
        <taxon>Borreliella</taxon>
    </lineage>
</organism>
<proteinExistence type="inferred from homology"/>
<sequence length="631" mass="73643">MSDLEKKYSKLIEGIITHLGDRKSLSFSELSNLLPDDILEPEILDCICSVLEDRGIRLVNKISELDLVVSEDGNDEEEEVEIESDRNFMILDDGFQSDEEDIDIDVKLDDCDEEDISVKDDLGSGYIKGNVLKDSHSEDPIKLYLKEIGKEFLLTGNQEVELAKQMDSGESIIENILKNEGLVIENYYNLVNTIYSRMEREEFFKREKDKDKESSPDYYNKKKRIASFYKIPLKPIQDRLISYVDNKHRVYDLGGDIFEKNLKKERLALKELLRDIPLYQEELRIFSDDYIDSANKIKDLQRQQRIILSRLKIEKIRDLRVLGRDLTIAEKKIEIEKSLKLKEDAIKEQITEAQLAQKELERIEMYYEYPTDKIISMSEEIAKGKQMMQHAKDQLIKANLRLVVSIAKKYANRGLHFFDLVQEGNIGLIKAVEKFEYKRGFKFSTYATWWIRQAITRSISDQARTIRVPVHMIEQINRLNRETRYLIQVLGKDPTDEELSDRLGWELKKVKTVKSVSREPVSLETPIGEEEDSVLSDFIEDKAIKNPANHTSFVVLQDQIRAILGTLPEREQEVVKMRFGLEDGYSLTLEEVGLHFNVTRERIRQIESKALRRLKNPKKTQKLKDYLEDLN</sequence>
<feature type="chain" id="PRO_0000093876" description="RNA polymerase sigma factor RpoD">
    <location>
        <begin position="1"/>
        <end position="631"/>
    </location>
</feature>
<feature type="DNA-binding region" description="H-T-H motif" evidence="1">
    <location>
        <begin position="589"/>
        <end position="608"/>
    </location>
</feature>
<feature type="region of interest" description="Sigma-70 factor domain-2" evidence="1">
    <location>
        <begin position="395"/>
        <end position="465"/>
    </location>
</feature>
<feature type="region of interest" description="Sigma-70 factor domain-3" evidence="1">
    <location>
        <begin position="474"/>
        <end position="550"/>
    </location>
</feature>
<feature type="region of interest" description="Sigma-70 factor domain-4" evidence="1">
    <location>
        <begin position="563"/>
        <end position="616"/>
    </location>
</feature>
<feature type="short sequence motif" description="Interaction with polymerase core subunit RpoC">
    <location>
        <begin position="419"/>
        <end position="422"/>
    </location>
</feature>
<accession>P52323</accession>
<reference key="1">
    <citation type="journal article" date="1996" name="Gene">
        <title>Sequence of a gene encoding a putative primary sigma factor from Borrelia burgdorferi strain B31.</title>
        <authorList>
            <person name="Tsai C.-P."/>
            <person name="Pan M.-J."/>
        </authorList>
    </citation>
    <scope>NUCLEOTIDE SEQUENCE [GENOMIC DNA]</scope>
    <source>
        <strain>ATCC 35210 / DSM 4680 / CIP 102532 / B31</strain>
    </source>
</reference>
<reference key="2">
    <citation type="journal article" date="1997" name="Nature">
        <title>Genomic sequence of a Lyme disease spirochaete, Borrelia burgdorferi.</title>
        <authorList>
            <person name="Fraser C.M."/>
            <person name="Casjens S."/>
            <person name="Huang W.M."/>
            <person name="Sutton G.G."/>
            <person name="Clayton R.A."/>
            <person name="Lathigra R."/>
            <person name="White O."/>
            <person name="Ketchum K.A."/>
            <person name="Dodson R.J."/>
            <person name="Hickey E.K."/>
            <person name="Gwinn M.L."/>
            <person name="Dougherty B.A."/>
            <person name="Tomb J.-F."/>
            <person name="Fleischmann R.D."/>
            <person name="Richardson D.L."/>
            <person name="Peterson J.D."/>
            <person name="Kerlavage A.R."/>
            <person name="Quackenbush J."/>
            <person name="Salzberg S.L."/>
            <person name="Hanson M."/>
            <person name="van Vugt R."/>
            <person name="Palmer N."/>
            <person name="Adams M.D."/>
            <person name="Gocayne J.D."/>
            <person name="Weidman J.F."/>
            <person name="Utterback T.R."/>
            <person name="Watthey L."/>
            <person name="McDonald L.A."/>
            <person name="Artiach P."/>
            <person name="Bowman C."/>
            <person name="Garland S.A."/>
            <person name="Fujii C."/>
            <person name="Cotton M.D."/>
            <person name="Horst K."/>
            <person name="Roberts K.M."/>
            <person name="Hatch B."/>
            <person name="Smith H.O."/>
            <person name="Venter J.C."/>
        </authorList>
    </citation>
    <scope>NUCLEOTIDE SEQUENCE [LARGE SCALE GENOMIC DNA]</scope>
    <source>
        <strain>ATCC 35210 / DSM 4680 / CIP 102532 / B31</strain>
    </source>
</reference>
<reference key="3">
    <citation type="journal article" date="1997" name="FEMS Microbiol. Lett.">
        <title>Sequence diversity of a gene encoding a putative primary sigma factor among Borrelia burgdorferi sensu lato strains.</title>
        <authorList>
            <person name="Pan M.-J."/>
            <person name="Tsai C.-P."/>
            <person name="Yeh J.C."/>
        </authorList>
    </citation>
    <scope>NUCLEOTIDE SEQUENCE [GENOMIC DNA] OF 165-614</scope>
    <source>
        <strain>ATCC 53899 / 297</strain>
    </source>
</reference>
<evidence type="ECO:0000255" key="1">
    <source>
        <dbReference type="HAMAP-Rule" id="MF_00963"/>
    </source>
</evidence>
<keyword id="KW-0963">Cytoplasm</keyword>
<keyword id="KW-0238">DNA-binding</keyword>
<keyword id="KW-1185">Reference proteome</keyword>
<keyword id="KW-0731">Sigma factor</keyword>
<keyword id="KW-0804">Transcription</keyword>
<keyword id="KW-0805">Transcription regulation</keyword>
<dbReference type="EMBL" id="U17591">
    <property type="protein sequence ID" value="AAC44104.1"/>
    <property type="molecule type" value="Genomic_DNA"/>
</dbReference>
<dbReference type="EMBL" id="AE000783">
    <property type="protein sequence ID" value="AAC67061.1"/>
    <property type="molecule type" value="Genomic_DNA"/>
</dbReference>
<dbReference type="EMBL" id="U68006">
    <property type="protein sequence ID" value="AAC45100.1"/>
    <property type="molecule type" value="Genomic_DNA"/>
</dbReference>
<dbReference type="PIR" id="G70188">
    <property type="entry name" value="G70188"/>
</dbReference>
<dbReference type="RefSeq" id="NP_212846.1">
    <property type="nucleotide sequence ID" value="NC_001318.1"/>
</dbReference>
<dbReference type="RefSeq" id="WP_002656292.1">
    <property type="nucleotide sequence ID" value="NC_001318.1"/>
</dbReference>
<dbReference type="SMR" id="P52323"/>
<dbReference type="STRING" id="224326.BB_0712"/>
<dbReference type="PaxDb" id="224326-BB_0712"/>
<dbReference type="EnsemblBacteria" id="AAC67061">
    <property type="protein sequence ID" value="AAC67061"/>
    <property type="gene ID" value="BB_0712"/>
</dbReference>
<dbReference type="GeneID" id="56567522"/>
<dbReference type="KEGG" id="bbu:BB_0712"/>
<dbReference type="PATRIC" id="fig|224326.49.peg.1103"/>
<dbReference type="HOGENOM" id="CLU_014793_7_2_12"/>
<dbReference type="OrthoDB" id="9809557at2"/>
<dbReference type="Proteomes" id="UP000001807">
    <property type="component" value="Chromosome"/>
</dbReference>
<dbReference type="GO" id="GO:0005737">
    <property type="term" value="C:cytoplasm"/>
    <property type="evidence" value="ECO:0007669"/>
    <property type="project" value="UniProtKB-SubCell"/>
</dbReference>
<dbReference type="GO" id="GO:0003677">
    <property type="term" value="F:DNA binding"/>
    <property type="evidence" value="ECO:0007669"/>
    <property type="project" value="UniProtKB-UniRule"/>
</dbReference>
<dbReference type="GO" id="GO:0016987">
    <property type="term" value="F:sigma factor activity"/>
    <property type="evidence" value="ECO:0007669"/>
    <property type="project" value="UniProtKB-UniRule"/>
</dbReference>
<dbReference type="GO" id="GO:0006352">
    <property type="term" value="P:DNA-templated transcription initiation"/>
    <property type="evidence" value="ECO:0007669"/>
    <property type="project" value="UniProtKB-UniRule"/>
</dbReference>
<dbReference type="CDD" id="cd06171">
    <property type="entry name" value="Sigma70_r4"/>
    <property type="match status" value="1"/>
</dbReference>
<dbReference type="FunFam" id="1.10.601.10:FF:000001">
    <property type="entry name" value="RNA polymerase sigma factor SigA"/>
    <property type="match status" value="1"/>
</dbReference>
<dbReference type="Gene3D" id="1.10.601.10">
    <property type="entry name" value="RNA Polymerase Primary Sigma Factor"/>
    <property type="match status" value="1"/>
</dbReference>
<dbReference type="Gene3D" id="1.10.10.10">
    <property type="entry name" value="Winged helix-like DNA-binding domain superfamily/Winged helix DNA-binding domain"/>
    <property type="match status" value="2"/>
</dbReference>
<dbReference type="HAMAP" id="MF_00963">
    <property type="entry name" value="Sigma70_RpoD_SigA"/>
    <property type="match status" value="1"/>
</dbReference>
<dbReference type="InterPro" id="IPR014284">
    <property type="entry name" value="RNA_pol_sigma-70_dom"/>
</dbReference>
<dbReference type="InterPro" id="IPR000943">
    <property type="entry name" value="RNA_pol_sigma70"/>
</dbReference>
<dbReference type="InterPro" id="IPR009042">
    <property type="entry name" value="RNA_pol_sigma70_r1_2"/>
</dbReference>
<dbReference type="InterPro" id="IPR007627">
    <property type="entry name" value="RNA_pol_sigma70_r2"/>
</dbReference>
<dbReference type="InterPro" id="IPR007624">
    <property type="entry name" value="RNA_pol_sigma70_r3"/>
</dbReference>
<dbReference type="InterPro" id="IPR007630">
    <property type="entry name" value="RNA_pol_sigma70_r4"/>
</dbReference>
<dbReference type="InterPro" id="IPR007127">
    <property type="entry name" value="RNA_pol_sigma_70_r1_1"/>
</dbReference>
<dbReference type="InterPro" id="IPR013325">
    <property type="entry name" value="RNA_pol_sigma_r2"/>
</dbReference>
<dbReference type="InterPro" id="IPR013324">
    <property type="entry name" value="RNA_pol_sigma_r3/r4-like"/>
</dbReference>
<dbReference type="InterPro" id="IPR012760">
    <property type="entry name" value="RNA_pol_sigma_RpoD_C"/>
</dbReference>
<dbReference type="InterPro" id="IPR050239">
    <property type="entry name" value="Sigma-70_RNA_pol_init_factors"/>
</dbReference>
<dbReference type="InterPro" id="IPR028630">
    <property type="entry name" value="Sigma70_RpoD"/>
</dbReference>
<dbReference type="InterPro" id="IPR036388">
    <property type="entry name" value="WH-like_DNA-bd_sf"/>
</dbReference>
<dbReference type="NCBIfam" id="NF004208">
    <property type="entry name" value="PRK05658.1"/>
    <property type="match status" value="1"/>
</dbReference>
<dbReference type="NCBIfam" id="TIGR02393">
    <property type="entry name" value="RpoD_Cterm"/>
    <property type="match status" value="1"/>
</dbReference>
<dbReference type="NCBIfam" id="TIGR02937">
    <property type="entry name" value="sigma70-ECF"/>
    <property type="match status" value="1"/>
</dbReference>
<dbReference type="PANTHER" id="PTHR30603">
    <property type="entry name" value="RNA POLYMERASE SIGMA FACTOR RPO"/>
    <property type="match status" value="1"/>
</dbReference>
<dbReference type="PANTHER" id="PTHR30603:SF60">
    <property type="entry name" value="RNA POLYMERASE SIGMA FACTOR RPOD"/>
    <property type="match status" value="1"/>
</dbReference>
<dbReference type="Pfam" id="PF03979">
    <property type="entry name" value="Sigma70_r1_1"/>
    <property type="match status" value="1"/>
</dbReference>
<dbReference type="Pfam" id="PF00140">
    <property type="entry name" value="Sigma70_r1_2"/>
    <property type="match status" value="1"/>
</dbReference>
<dbReference type="Pfam" id="PF04542">
    <property type="entry name" value="Sigma70_r2"/>
    <property type="match status" value="1"/>
</dbReference>
<dbReference type="Pfam" id="PF04539">
    <property type="entry name" value="Sigma70_r3"/>
    <property type="match status" value="1"/>
</dbReference>
<dbReference type="Pfam" id="PF04545">
    <property type="entry name" value="Sigma70_r4"/>
    <property type="match status" value="1"/>
</dbReference>
<dbReference type="PRINTS" id="PR00046">
    <property type="entry name" value="SIGMA70FCT"/>
</dbReference>
<dbReference type="SUPFAM" id="SSF88946">
    <property type="entry name" value="Sigma2 domain of RNA polymerase sigma factors"/>
    <property type="match status" value="1"/>
</dbReference>
<dbReference type="SUPFAM" id="SSF88659">
    <property type="entry name" value="Sigma3 and sigma4 domains of RNA polymerase sigma factors"/>
    <property type="match status" value="2"/>
</dbReference>
<dbReference type="PROSITE" id="PS00715">
    <property type="entry name" value="SIGMA70_1"/>
    <property type="match status" value="1"/>
</dbReference>
<dbReference type="PROSITE" id="PS00716">
    <property type="entry name" value="SIGMA70_2"/>
    <property type="match status" value="1"/>
</dbReference>
<gene>
    <name evidence="1" type="primary">rpoD</name>
    <name type="ordered locus">BB_0712</name>
</gene>
<comment type="function">
    <text evidence="1">Sigma factors are initiation factors that promote the attachment of RNA polymerase to specific initiation sites and are then released. This sigma factor is the primary sigma factor during exponential growth.</text>
</comment>
<comment type="subunit">
    <text evidence="1">Interacts transiently with the RNA polymerase catalytic core.</text>
</comment>
<comment type="subcellular location">
    <subcellularLocation>
        <location evidence="1">Cytoplasm</location>
    </subcellularLocation>
</comment>
<comment type="similarity">
    <text evidence="1">Belongs to the sigma-70 factor family. RpoD/SigA subfamily.</text>
</comment>
<protein>
    <recommendedName>
        <fullName evidence="1">RNA polymerase sigma factor RpoD</fullName>
    </recommendedName>
    <alternativeName>
        <fullName evidence="1">Sigma-70</fullName>
    </alternativeName>
</protein>